<feature type="chain" id="PRO_1000211762" description="Putative 3-methyladenine DNA glycosylase">
    <location>
        <begin position="1"/>
        <end position="207"/>
    </location>
</feature>
<dbReference type="EC" id="3.2.2.-" evidence="1"/>
<dbReference type="EMBL" id="FM242711">
    <property type="protein sequence ID" value="CAS04715.1"/>
    <property type="molecule type" value="Genomic_DNA"/>
</dbReference>
<dbReference type="RefSeq" id="WP_003724850.1">
    <property type="nucleotide sequence ID" value="NC_012488.1"/>
</dbReference>
<dbReference type="SMR" id="C1L1K0"/>
<dbReference type="KEGG" id="lmc:Lm4b_00947"/>
<dbReference type="HOGENOM" id="CLU_060471_2_0_9"/>
<dbReference type="GO" id="GO:0003905">
    <property type="term" value="F:alkylbase DNA N-glycosylase activity"/>
    <property type="evidence" value="ECO:0007669"/>
    <property type="project" value="InterPro"/>
</dbReference>
<dbReference type="GO" id="GO:0003677">
    <property type="term" value="F:DNA binding"/>
    <property type="evidence" value="ECO:0007669"/>
    <property type="project" value="InterPro"/>
</dbReference>
<dbReference type="GO" id="GO:0006284">
    <property type="term" value="P:base-excision repair"/>
    <property type="evidence" value="ECO:0007669"/>
    <property type="project" value="InterPro"/>
</dbReference>
<dbReference type="CDD" id="cd00540">
    <property type="entry name" value="AAG"/>
    <property type="match status" value="1"/>
</dbReference>
<dbReference type="FunFam" id="3.10.300.10:FF:000001">
    <property type="entry name" value="Putative 3-methyladenine DNA glycosylase"/>
    <property type="match status" value="1"/>
</dbReference>
<dbReference type="Gene3D" id="3.10.300.10">
    <property type="entry name" value="Methylpurine-DNA glycosylase (MPG)"/>
    <property type="match status" value="1"/>
</dbReference>
<dbReference type="HAMAP" id="MF_00527">
    <property type="entry name" value="3MGH"/>
    <property type="match status" value="1"/>
</dbReference>
<dbReference type="InterPro" id="IPR011034">
    <property type="entry name" value="Formyl_transferase-like_C_sf"/>
</dbReference>
<dbReference type="InterPro" id="IPR003180">
    <property type="entry name" value="MPG"/>
</dbReference>
<dbReference type="InterPro" id="IPR036995">
    <property type="entry name" value="MPG_sf"/>
</dbReference>
<dbReference type="NCBIfam" id="TIGR00567">
    <property type="entry name" value="3mg"/>
    <property type="match status" value="1"/>
</dbReference>
<dbReference type="NCBIfam" id="NF002002">
    <property type="entry name" value="PRK00802.1-2"/>
    <property type="match status" value="1"/>
</dbReference>
<dbReference type="PANTHER" id="PTHR10429">
    <property type="entry name" value="DNA-3-METHYLADENINE GLYCOSYLASE"/>
    <property type="match status" value="1"/>
</dbReference>
<dbReference type="PANTHER" id="PTHR10429:SF0">
    <property type="entry name" value="DNA-3-METHYLADENINE GLYCOSYLASE"/>
    <property type="match status" value="1"/>
</dbReference>
<dbReference type="Pfam" id="PF02245">
    <property type="entry name" value="Pur_DNA_glyco"/>
    <property type="match status" value="1"/>
</dbReference>
<dbReference type="SUPFAM" id="SSF50486">
    <property type="entry name" value="FMT C-terminal domain-like"/>
    <property type="match status" value="1"/>
</dbReference>
<keyword id="KW-0227">DNA damage</keyword>
<keyword id="KW-0234">DNA repair</keyword>
<keyword id="KW-0378">Hydrolase</keyword>
<gene>
    <name type="ordered locus">Lm4b_00947</name>
</gene>
<accession>C1L1K0</accession>
<organism>
    <name type="scientific">Listeria monocytogenes serotype 4b (strain CLIP80459)</name>
    <dbReference type="NCBI Taxonomy" id="568819"/>
    <lineage>
        <taxon>Bacteria</taxon>
        <taxon>Bacillati</taxon>
        <taxon>Bacillota</taxon>
        <taxon>Bacilli</taxon>
        <taxon>Bacillales</taxon>
        <taxon>Listeriaceae</taxon>
        <taxon>Listeria</taxon>
    </lineage>
</organism>
<reference key="1">
    <citation type="journal article" date="2012" name="BMC Genomics">
        <title>Comparative genomics and transcriptomics of lineages I, II, and III strains of Listeria monocytogenes.</title>
        <authorList>
            <person name="Hain T."/>
            <person name="Ghai R."/>
            <person name="Billion A."/>
            <person name="Kuenne C.T."/>
            <person name="Steinweg C."/>
            <person name="Izar B."/>
            <person name="Mohamed W."/>
            <person name="Mraheil M."/>
            <person name="Domann E."/>
            <person name="Schaffrath S."/>
            <person name="Karst U."/>
            <person name="Goesmann A."/>
            <person name="Oehm S."/>
            <person name="Puhler A."/>
            <person name="Merkl R."/>
            <person name="Vorwerk S."/>
            <person name="Glaser P."/>
            <person name="Garrido P."/>
            <person name="Rusniok C."/>
            <person name="Buchrieser C."/>
            <person name="Goebel W."/>
            <person name="Chakraborty T."/>
        </authorList>
    </citation>
    <scope>NUCLEOTIDE SEQUENCE [LARGE SCALE GENOMIC DNA]</scope>
    <source>
        <strain>CLIP80459</strain>
    </source>
</reference>
<comment type="similarity">
    <text evidence="1">Belongs to the DNA glycosylase MPG family.</text>
</comment>
<name>3MGH_LISMC</name>
<proteinExistence type="inferred from homology"/>
<protein>
    <recommendedName>
        <fullName evidence="1">Putative 3-methyladenine DNA glycosylase</fullName>
        <ecNumber evidence="1">3.2.2.-</ecNumber>
    </recommendedName>
</protein>
<sequence length="207" mass="23491">MEAIITKEFFEDKTTIELARDILGMRLVHQTDEGILSGLIVETEAYLGATDMAAHSFQNLRTKRTEVMFSSPGRIYMYQMHRQVLLNFITMPKGIPEAILIRAIEPDEQAKQQMVQNRHGKTGYELTNGPGKLTQALGLSMQDYGKTLFDSNIWLEEAKLPHLIEATNRIGVPNKGIATHFPLRFTVKGSPYISAQRKSRILTDIWK</sequence>
<evidence type="ECO:0000255" key="1">
    <source>
        <dbReference type="HAMAP-Rule" id="MF_00527"/>
    </source>
</evidence>